<accession>A8ALC5</accession>
<feature type="chain" id="PRO_0000315547" description="UPF0325 protein CKO_03204">
    <location>
        <begin position="1"/>
        <end position="128"/>
    </location>
</feature>
<name>Y3204_CITK8</name>
<keyword id="KW-1185">Reference proteome</keyword>
<gene>
    <name type="ordered locus">CKO_03204</name>
</gene>
<proteinExistence type="inferred from homology"/>
<dbReference type="EMBL" id="CP000822">
    <property type="protein sequence ID" value="ABV14288.1"/>
    <property type="status" value="ALT_INIT"/>
    <property type="molecule type" value="Genomic_DNA"/>
</dbReference>
<dbReference type="RefSeq" id="WP_024130689.1">
    <property type="nucleotide sequence ID" value="NC_009792.1"/>
</dbReference>
<dbReference type="SMR" id="A8ALC5"/>
<dbReference type="STRING" id="290338.CKO_03204"/>
<dbReference type="GeneID" id="45136986"/>
<dbReference type="KEGG" id="cko:CKO_03204"/>
<dbReference type="HOGENOM" id="CLU_136774_0_0_6"/>
<dbReference type="OrthoDB" id="5624524at2"/>
<dbReference type="Proteomes" id="UP000008148">
    <property type="component" value="Chromosome"/>
</dbReference>
<dbReference type="HAMAP" id="MF_01519">
    <property type="entry name" value="UPF0325"/>
    <property type="match status" value="1"/>
</dbReference>
<dbReference type="InterPro" id="IPR020911">
    <property type="entry name" value="UPF0325"/>
</dbReference>
<dbReference type="NCBIfam" id="NF010213">
    <property type="entry name" value="PRK13677.1"/>
    <property type="match status" value="1"/>
</dbReference>
<dbReference type="Pfam" id="PF11944">
    <property type="entry name" value="DUF3461"/>
    <property type="match status" value="1"/>
</dbReference>
<organism>
    <name type="scientific">Citrobacter koseri (strain ATCC BAA-895 / CDC 4225-83 / SGSC4696)</name>
    <dbReference type="NCBI Taxonomy" id="290338"/>
    <lineage>
        <taxon>Bacteria</taxon>
        <taxon>Pseudomonadati</taxon>
        <taxon>Pseudomonadota</taxon>
        <taxon>Gammaproteobacteria</taxon>
        <taxon>Enterobacterales</taxon>
        <taxon>Enterobacteriaceae</taxon>
        <taxon>Citrobacter</taxon>
    </lineage>
</organism>
<protein>
    <recommendedName>
        <fullName evidence="1">UPF0325 protein CKO_03204</fullName>
    </recommendedName>
</protein>
<sequence length="128" mass="15135">MYDNLKSLGITNPEEIDRYSLRQEANNDILKIYFQKDRGEFFAKSVKFKYPRQRKTVVADGIGQGYKEVQEISPNLRYVIDELDQICQRDRTEVDLKRKILDDLRHLESVVANKINEIEADLEKLTRK</sequence>
<reference key="1">
    <citation type="submission" date="2007-08" db="EMBL/GenBank/DDBJ databases">
        <authorList>
            <consortium name="The Citrobacter koseri Genome Sequencing Project"/>
            <person name="McClelland M."/>
            <person name="Sanderson E.K."/>
            <person name="Porwollik S."/>
            <person name="Spieth J."/>
            <person name="Clifton W.S."/>
            <person name="Latreille P."/>
            <person name="Courtney L."/>
            <person name="Wang C."/>
            <person name="Pepin K."/>
            <person name="Bhonagiri V."/>
            <person name="Nash W."/>
            <person name="Johnson M."/>
            <person name="Thiruvilangam P."/>
            <person name="Wilson R."/>
        </authorList>
    </citation>
    <scope>NUCLEOTIDE SEQUENCE [LARGE SCALE GENOMIC DNA]</scope>
    <source>
        <strain>ATCC BAA-895 / CDC 4225-83 / SGSC4696</strain>
    </source>
</reference>
<comment type="similarity">
    <text evidence="1">Belongs to the UPF0325 family.</text>
</comment>
<comment type="sequence caution" evidence="2">
    <conflict type="erroneous initiation">
        <sequence resource="EMBL-CDS" id="ABV14288"/>
    </conflict>
</comment>
<evidence type="ECO:0000255" key="1">
    <source>
        <dbReference type="HAMAP-Rule" id="MF_01519"/>
    </source>
</evidence>
<evidence type="ECO:0000305" key="2"/>